<name>RL16_KOSOT</name>
<sequence>MLMPKRVKYRKQQRGKMRGKAKGGTLVHFGDWGLKALEPHWITAQQIEACRIAIMRTLKRNGKVWIRVFPDKPITSKGIGVRMGKGKGDVEGWVAVVKPGKILFEIGGINDELAKEALAYAATKLPIKTKIVPRYEIGGEL</sequence>
<organism>
    <name type="scientific">Kosmotoga olearia (strain ATCC BAA-1733 / DSM 21960 / TBF 19.5.1)</name>
    <dbReference type="NCBI Taxonomy" id="521045"/>
    <lineage>
        <taxon>Bacteria</taxon>
        <taxon>Thermotogati</taxon>
        <taxon>Thermotogota</taxon>
        <taxon>Thermotogae</taxon>
        <taxon>Kosmotogales</taxon>
        <taxon>Kosmotogaceae</taxon>
        <taxon>Kosmotoga</taxon>
    </lineage>
</organism>
<protein>
    <recommendedName>
        <fullName evidence="1">Large ribosomal subunit protein uL16</fullName>
    </recommendedName>
    <alternativeName>
        <fullName evidence="2">50S ribosomal protein L16</fullName>
    </alternativeName>
</protein>
<accession>C5CGQ7</accession>
<evidence type="ECO:0000255" key="1">
    <source>
        <dbReference type="HAMAP-Rule" id="MF_01342"/>
    </source>
</evidence>
<evidence type="ECO:0000305" key="2"/>
<dbReference type="EMBL" id="CP001634">
    <property type="protein sequence ID" value="ACR80576.1"/>
    <property type="molecule type" value="Genomic_DNA"/>
</dbReference>
<dbReference type="RefSeq" id="WP_015869219.1">
    <property type="nucleotide sequence ID" value="NC_012785.1"/>
</dbReference>
<dbReference type="SMR" id="C5CGQ7"/>
<dbReference type="STRING" id="521045.Kole_1895"/>
<dbReference type="KEGG" id="kol:Kole_1895"/>
<dbReference type="eggNOG" id="COG0197">
    <property type="taxonomic scope" value="Bacteria"/>
</dbReference>
<dbReference type="HOGENOM" id="CLU_078858_2_1_0"/>
<dbReference type="OrthoDB" id="9802589at2"/>
<dbReference type="Proteomes" id="UP000002382">
    <property type="component" value="Chromosome"/>
</dbReference>
<dbReference type="GO" id="GO:0022625">
    <property type="term" value="C:cytosolic large ribosomal subunit"/>
    <property type="evidence" value="ECO:0007669"/>
    <property type="project" value="TreeGrafter"/>
</dbReference>
<dbReference type="GO" id="GO:0019843">
    <property type="term" value="F:rRNA binding"/>
    <property type="evidence" value="ECO:0007669"/>
    <property type="project" value="UniProtKB-UniRule"/>
</dbReference>
<dbReference type="GO" id="GO:0003735">
    <property type="term" value="F:structural constituent of ribosome"/>
    <property type="evidence" value="ECO:0007669"/>
    <property type="project" value="InterPro"/>
</dbReference>
<dbReference type="GO" id="GO:0000049">
    <property type="term" value="F:tRNA binding"/>
    <property type="evidence" value="ECO:0007669"/>
    <property type="project" value="UniProtKB-KW"/>
</dbReference>
<dbReference type="GO" id="GO:0006412">
    <property type="term" value="P:translation"/>
    <property type="evidence" value="ECO:0007669"/>
    <property type="project" value="UniProtKB-UniRule"/>
</dbReference>
<dbReference type="CDD" id="cd01433">
    <property type="entry name" value="Ribosomal_L16_L10e"/>
    <property type="match status" value="1"/>
</dbReference>
<dbReference type="FunFam" id="3.90.1170.10:FF:000001">
    <property type="entry name" value="50S ribosomal protein L16"/>
    <property type="match status" value="1"/>
</dbReference>
<dbReference type="Gene3D" id="3.90.1170.10">
    <property type="entry name" value="Ribosomal protein L10e/L16"/>
    <property type="match status" value="1"/>
</dbReference>
<dbReference type="HAMAP" id="MF_01342">
    <property type="entry name" value="Ribosomal_uL16"/>
    <property type="match status" value="1"/>
</dbReference>
<dbReference type="InterPro" id="IPR047873">
    <property type="entry name" value="Ribosomal_uL16"/>
</dbReference>
<dbReference type="InterPro" id="IPR000114">
    <property type="entry name" value="Ribosomal_uL16_bact-type"/>
</dbReference>
<dbReference type="InterPro" id="IPR020798">
    <property type="entry name" value="Ribosomal_uL16_CS"/>
</dbReference>
<dbReference type="InterPro" id="IPR016180">
    <property type="entry name" value="Ribosomal_uL16_dom"/>
</dbReference>
<dbReference type="InterPro" id="IPR036920">
    <property type="entry name" value="Ribosomal_uL16_sf"/>
</dbReference>
<dbReference type="NCBIfam" id="TIGR01164">
    <property type="entry name" value="rplP_bact"/>
    <property type="match status" value="1"/>
</dbReference>
<dbReference type="PANTHER" id="PTHR12220">
    <property type="entry name" value="50S/60S RIBOSOMAL PROTEIN L16"/>
    <property type="match status" value="1"/>
</dbReference>
<dbReference type="PANTHER" id="PTHR12220:SF13">
    <property type="entry name" value="LARGE RIBOSOMAL SUBUNIT PROTEIN UL16M"/>
    <property type="match status" value="1"/>
</dbReference>
<dbReference type="Pfam" id="PF00252">
    <property type="entry name" value="Ribosomal_L16"/>
    <property type="match status" value="1"/>
</dbReference>
<dbReference type="PRINTS" id="PR00060">
    <property type="entry name" value="RIBOSOMALL16"/>
</dbReference>
<dbReference type="SUPFAM" id="SSF54686">
    <property type="entry name" value="Ribosomal protein L16p/L10e"/>
    <property type="match status" value="1"/>
</dbReference>
<dbReference type="PROSITE" id="PS00586">
    <property type="entry name" value="RIBOSOMAL_L16_1"/>
    <property type="match status" value="1"/>
</dbReference>
<dbReference type="PROSITE" id="PS00701">
    <property type="entry name" value="RIBOSOMAL_L16_2"/>
    <property type="match status" value="1"/>
</dbReference>
<feature type="chain" id="PRO_1000214737" description="Large ribosomal subunit protein uL16">
    <location>
        <begin position="1"/>
        <end position="141"/>
    </location>
</feature>
<proteinExistence type="inferred from homology"/>
<gene>
    <name evidence="1" type="primary">rplP</name>
    <name type="ordered locus">Kole_1895</name>
</gene>
<comment type="function">
    <text evidence="1">Binds 23S rRNA and is also seen to make contacts with the A and possibly P site tRNAs.</text>
</comment>
<comment type="subunit">
    <text evidence="1">Part of the 50S ribosomal subunit.</text>
</comment>
<comment type="similarity">
    <text evidence="1">Belongs to the universal ribosomal protein uL16 family.</text>
</comment>
<keyword id="KW-1185">Reference proteome</keyword>
<keyword id="KW-0687">Ribonucleoprotein</keyword>
<keyword id="KW-0689">Ribosomal protein</keyword>
<keyword id="KW-0694">RNA-binding</keyword>
<keyword id="KW-0699">rRNA-binding</keyword>
<keyword id="KW-0820">tRNA-binding</keyword>
<reference key="1">
    <citation type="submission" date="2009-06" db="EMBL/GenBank/DDBJ databases">
        <title>Complete sequence of Thermotogales bacterium TBF 19.5.1.</title>
        <authorList>
            <consortium name="US DOE Joint Genome Institute"/>
            <person name="Lucas S."/>
            <person name="Copeland A."/>
            <person name="Lapidus A."/>
            <person name="Glavina del Rio T."/>
            <person name="Tice H."/>
            <person name="Bruce D."/>
            <person name="Goodwin L."/>
            <person name="Pitluck S."/>
            <person name="Chertkov O."/>
            <person name="Brettin T."/>
            <person name="Detter J.C."/>
            <person name="Han C."/>
            <person name="Schmutz J."/>
            <person name="Larimer F."/>
            <person name="Land M."/>
            <person name="Hauser L."/>
            <person name="Kyrpides N."/>
            <person name="Ovchinnikova G."/>
            <person name="Noll K."/>
        </authorList>
    </citation>
    <scope>NUCLEOTIDE SEQUENCE [LARGE SCALE GENOMIC DNA]</scope>
    <source>
        <strain>ATCC BAA-1733 / DSM 21960 / TBF 19.5.1</strain>
    </source>
</reference>